<name>CYOE_ECOSM</name>
<dbReference type="EC" id="2.5.1.141" evidence="1"/>
<dbReference type="EMBL" id="CP000970">
    <property type="protein sequence ID" value="ACB18350.1"/>
    <property type="molecule type" value="Genomic_DNA"/>
</dbReference>
<dbReference type="RefSeq" id="WP_000971336.1">
    <property type="nucleotide sequence ID" value="NC_010498.1"/>
</dbReference>
<dbReference type="SMR" id="B1LJI2"/>
<dbReference type="GeneID" id="75202853"/>
<dbReference type="KEGG" id="ecm:EcSMS35_0468"/>
<dbReference type="HOGENOM" id="CLU_029631_0_0_6"/>
<dbReference type="UniPathway" id="UPA00834">
    <property type="reaction ID" value="UER00712"/>
</dbReference>
<dbReference type="Proteomes" id="UP000007011">
    <property type="component" value="Chromosome"/>
</dbReference>
<dbReference type="GO" id="GO:0005886">
    <property type="term" value="C:plasma membrane"/>
    <property type="evidence" value="ECO:0007669"/>
    <property type="project" value="UniProtKB-SubCell"/>
</dbReference>
<dbReference type="GO" id="GO:0008495">
    <property type="term" value="F:protoheme IX farnesyltransferase activity"/>
    <property type="evidence" value="ECO:0007669"/>
    <property type="project" value="UniProtKB-UniRule"/>
</dbReference>
<dbReference type="GO" id="GO:0048034">
    <property type="term" value="P:heme O biosynthetic process"/>
    <property type="evidence" value="ECO:0007669"/>
    <property type="project" value="UniProtKB-UniRule"/>
</dbReference>
<dbReference type="CDD" id="cd13957">
    <property type="entry name" value="PT_UbiA_Cox10"/>
    <property type="match status" value="1"/>
</dbReference>
<dbReference type="FunFam" id="1.10.357.140:FF:000001">
    <property type="entry name" value="Protoheme IX farnesyltransferase"/>
    <property type="match status" value="1"/>
</dbReference>
<dbReference type="Gene3D" id="1.10.357.140">
    <property type="entry name" value="UbiA prenyltransferase"/>
    <property type="match status" value="1"/>
</dbReference>
<dbReference type="HAMAP" id="MF_00154">
    <property type="entry name" value="CyoE_CtaB"/>
    <property type="match status" value="1"/>
</dbReference>
<dbReference type="InterPro" id="IPR006369">
    <property type="entry name" value="Protohaem_IX_farnesylTrfase"/>
</dbReference>
<dbReference type="InterPro" id="IPR000537">
    <property type="entry name" value="UbiA_prenyltransferase"/>
</dbReference>
<dbReference type="InterPro" id="IPR030470">
    <property type="entry name" value="UbiA_prenylTrfase_CS"/>
</dbReference>
<dbReference type="InterPro" id="IPR044878">
    <property type="entry name" value="UbiA_sf"/>
</dbReference>
<dbReference type="NCBIfam" id="TIGR01473">
    <property type="entry name" value="cyoE_ctaB"/>
    <property type="match status" value="1"/>
</dbReference>
<dbReference type="NCBIfam" id="NF003348">
    <property type="entry name" value="PRK04375.1-1"/>
    <property type="match status" value="1"/>
</dbReference>
<dbReference type="PANTHER" id="PTHR43448">
    <property type="entry name" value="PROTOHEME IX FARNESYLTRANSFERASE, MITOCHONDRIAL"/>
    <property type="match status" value="1"/>
</dbReference>
<dbReference type="PANTHER" id="PTHR43448:SF2">
    <property type="entry name" value="PROTOHEME IX FARNESYLTRANSFERASE, MITOCHONDRIAL"/>
    <property type="match status" value="1"/>
</dbReference>
<dbReference type="Pfam" id="PF01040">
    <property type="entry name" value="UbiA"/>
    <property type="match status" value="1"/>
</dbReference>
<dbReference type="PROSITE" id="PS00943">
    <property type="entry name" value="UBIA"/>
    <property type="match status" value="1"/>
</dbReference>
<proteinExistence type="inferred from homology"/>
<keyword id="KW-0997">Cell inner membrane</keyword>
<keyword id="KW-1003">Cell membrane</keyword>
<keyword id="KW-0350">Heme biosynthesis</keyword>
<keyword id="KW-0472">Membrane</keyword>
<keyword id="KW-0808">Transferase</keyword>
<keyword id="KW-0812">Transmembrane</keyword>
<keyword id="KW-1133">Transmembrane helix</keyword>
<sequence>MMFKQYLQVTKPGIIFGNLISVIGGFLLASKGSIDYPLFIYTLVGVSLVVASGCVFNNYIDRDIDRKMERTKNRVLVKGLISPAVSLVYATLLGIAGFMLLWFGANPLACWLGVMGFVVYVGVYSLYMKRHSVYGTLIGSLSGAAPPVIGYCAVTGEFDSGAAILLAIFSLWQMPHSYAIAIFRFKDYQAANIPVLPVVKGISVAKNHITLYIIAFAVATLMLSLGGYAGYKYLVVAAAVSVWWLGMALRGYKVADDRIWARKLFGFSIIAITALSVMMSVDFMVPDSHTLLAAVW</sequence>
<protein>
    <recommendedName>
        <fullName evidence="1">Protoheme IX farnesyltransferase</fullName>
        <ecNumber evidence="1">2.5.1.141</ecNumber>
    </recommendedName>
    <alternativeName>
        <fullName evidence="1">Heme B farnesyltransferase</fullName>
    </alternativeName>
    <alternativeName>
        <fullName evidence="1">Heme O synthase</fullName>
    </alternativeName>
</protein>
<organism>
    <name type="scientific">Escherichia coli (strain SMS-3-5 / SECEC)</name>
    <dbReference type="NCBI Taxonomy" id="439855"/>
    <lineage>
        <taxon>Bacteria</taxon>
        <taxon>Pseudomonadati</taxon>
        <taxon>Pseudomonadota</taxon>
        <taxon>Gammaproteobacteria</taxon>
        <taxon>Enterobacterales</taxon>
        <taxon>Enterobacteriaceae</taxon>
        <taxon>Escherichia</taxon>
    </lineage>
</organism>
<reference key="1">
    <citation type="journal article" date="2008" name="J. Bacteriol.">
        <title>Insights into the environmental resistance gene pool from the genome sequence of the multidrug-resistant environmental isolate Escherichia coli SMS-3-5.</title>
        <authorList>
            <person name="Fricke W.F."/>
            <person name="Wright M.S."/>
            <person name="Lindell A.H."/>
            <person name="Harkins D.M."/>
            <person name="Baker-Austin C."/>
            <person name="Ravel J."/>
            <person name="Stepanauskas R."/>
        </authorList>
    </citation>
    <scope>NUCLEOTIDE SEQUENCE [LARGE SCALE GENOMIC DNA]</scope>
    <source>
        <strain>SMS-3-5 / SECEC</strain>
    </source>
</reference>
<feature type="chain" id="PRO_0000345996" description="Protoheme IX farnesyltransferase">
    <location>
        <begin position="1"/>
        <end position="296"/>
    </location>
</feature>
<feature type="topological domain" description="Cytoplasmic" evidence="1">
    <location>
        <begin position="1"/>
        <end position="9"/>
    </location>
</feature>
<feature type="transmembrane region" description="Helical" evidence="1">
    <location>
        <begin position="10"/>
        <end position="28"/>
    </location>
</feature>
<feature type="topological domain" description="Periplasmic" evidence="1">
    <location>
        <begin position="29"/>
        <end position="37"/>
    </location>
</feature>
<feature type="transmembrane region" description="Helical" evidence="1">
    <location>
        <begin position="38"/>
        <end position="56"/>
    </location>
</feature>
<feature type="topological domain" description="Cytoplasmic" evidence="1">
    <location>
        <begin position="57"/>
        <end position="78"/>
    </location>
</feature>
<feature type="transmembrane region" description="Helical" evidence="1">
    <location>
        <begin position="79"/>
        <end position="97"/>
    </location>
</feature>
<feature type="topological domain" description="Periplasmic" evidence="1">
    <location>
        <begin position="98"/>
        <end position="107"/>
    </location>
</feature>
<feature type="transmembrane region" description="Helical" evidence="1">
    <location>
        <begin position="108"/>
        <end position="126"/>
    </location>
</feature>
<feature type="topological domain" description="Cytoplasmic" evidence="1">
    <location>
        <begin position="127"/>
        <end position="197"/>
    </location>
</feature>
<feature type="transmembrane region" description="Helical" evidence="1">
    <location>
        <begin position="198"/>
        <end position="216"/>
    </location>
</feature>
<feature type="topological domain" description="Periplasmic" evidence="1">
    <location>
        <begin position="217"/>
        <end position="228"/>
    </location>
</feature>
<feature type="transmembrane region" description="Helical" evidence="1">
    <location>
        <begin position="229"/>
        <end position="247"/>
    </location>
</feature>
<feature type="topological domain" description="Cytoplasmic" evidence="1">
    <location>
        <begin position="248"/>
        <end position="268"/>
    </location>
</feature>
<feature type="transmembrane region" description="Helical" evidence="1">
    <location>
        <begin position="269"/>
        <end position="287"/>
    </location>
</feature>
<feature type="topological domain" description="Periplasmic" evidence="1">
    <location>
        <begin position="288"/>
        <end position="296"/>
    </location>
</feature>
<accession>B1LJI2</accession>
<evidence type="ECO:0000255" key="1">
    <source>
        <dbReference type="HAMAP-Rule" id="MF_00154"/>
    </source>
</evidence>
<comment type="function">
    <text evidence="1">Converts heme B (protoheme IX) to heme O by substitution of the vinyl group on carbon 2 of heme B porphyrin ring with a hydroxyethyl farnesyl side group.</text>
</comment>
<comment type="catalytic activity">
    <reaction evidence="1">
        <text>heme b + (2E,6E)-farnesyl diphosphate + H2O = Fe(II)-heme o + diphosphate</text>
        <dbReference type="Rhea" id="RHEA:28070"/>
        <dbReference type="ChEBI" id="CHEBI:15377"/>
        <dbReference type="ChEBI" id="CHEBI:33019"/>
        <dbReference type="ChEBI" id="CHEBI:60344"/>
        <dbReference type="ChEBI" id="CHEBI:60530"/>
        <dbReference type="ChEBI" id="CHEBI:175763"/>
        <dbReference type="EC" id="2.5.1.141"/>
    </reaction>
</comment>
<comment type="pathway">
    <text evidence="1">Porphyrin-containing compound metabolism; heme O biosynthesis; heme O from protoheme: step 1/1.</text>
</comment>
<comment type="subcellular location">
    <subcellularLocation>
        <location evidence="1">Cell inner membrane</location>
        <topology evidence="1">Multi-pass membrane protein</topology>
    </subcellularLocation>
</comment>
<comment type="miscellaneous">
    <text evidence="1">Carbon 2 of the heme B porphyrin ring is defined according to the Fischer nomenclature.</text>
</comment>
<comment type="similarity">
    <text evidence="1">Belongs to the UbiA prenyltransferase family. Protoheme IX farnesyltransferase subfamily.</text>
</comment>
<gene>
    <name evidence="1" type="primary">cyoE</name>
    <name type="ordered locus">EcSMS35_0468</name>
</gene>